<organism>
    <name type="scientific">Escherichia fergusonii (strain ATCC 35469 / DSM 13698 / CCUG 18766 / IAM 14443 / JCM 21226 / LMG 7866 / NBRC 102419 / NCTC 12128 / CDC 0568-73)</name>
    <dbReference type="NCBI Taxonomy" id="585054"/>
    <lineage>
        <taxon>Bacteria</taxon>
        <taxon>Pseudomonadati</taxon>
        <taxon>Pseudomonadota</taxon>
        <taxon>Gammaproteobacteria</taxon>
        <taxon>Enterobacterales</taxon>
        <taxon>Enterobacteriaceae</taxon>
        <taxon>Escherichia</taxon>
    </lineage>
</organism>
<gene>
    <name evidence="1" type="primary">cof</name>
    <name type="ordered locus">EFER_2571</name>
</gene>
<proteinExistence type="inferred from homology"/>
<name>COF_ESCF3</name>
<protein>
    <recommendedName>
        <fullName evidence="1">HMP-PP phosphatase</fullName>
        <ecNumber evidence="1">3.6.1.-</ecNumber>
    </recommendedName>
</protein>
<keyword id="KW-0378">Hydrolase</keyword>
<keyword id="KW-0460">Magnesium</keyword>
<keyword id="KW-0479">Metal-binding</keyword>
<reference key="1">
    <citation type="journal article" date="2009" name="PLoS Genet.">
        <title>Organised genome dynamics in the Escherichia coli species results in highly diverse adaptive paths.</title>
        <authorList>
            <person name="Touchon M."/>
            <person name="Hoede C."/>
            <person name="Tenaillon O."/>
            <person name="Barbe V."/>
            <person name="Baeriswyl S."/>
            <person name="Bidet P."/>
            <person name="Bingen E."/>
            <person name="Bonacorsi S."/>
            <person name="Bouchier C."/>
            <person name="Bouvet O."/>
            <person name="Calteau A."/>
            <person name="Chiapello H."/>
            <person name="Clermont O."/>
            <person name="Cruveiller S."/>
            <person name="Danchin A."/>
            <person name="Diard M."/>
            <person name="Dossat C."/>
            <person name="Karoui M.E."/>
            <person name="Frapy E."/>
            <person name="Garry L."/>
            <person name="Ghigo J.M."/>
            <person name="Gilles A.M."/>
            <person name="Johnson J."/>
            <person name="Le Bouguenec C."/>
            <person name="Lescat M."/>
            <person name="Mangenot S."/>
            <person name="Martinez-Jehanne V."/>
            <person name="Matic I."/>
            <person name="Nassif X."/>
            <person name="Oztas S."/>
            <person name="Petit M.A."/>
            <person name="Pichon C."/>
            <person name="Rouy Z."/>
            <person name="Ruf C.S."/>
            <person name="Schneider D."/>
            <person name="Tourret J."/>
            <person name="Vacherie B."/>
            <person name="Vallenet D."/>
            <person name="Medigue C."/>
            <person name="Rocha E.P.C."/>
            <person name="Denamur E."/>
        </authorList>
    </citation>
    <scope>NUCLEOTIDE SEQUENCE [LARGE SCALE GENOMIC DNA]</scope>
    <source>
        <strain>ATCC 35469 / DSM 13698 / BCRC 15582 / CCUG 18766 / IAM 14443 / JCM 21226 / LMG 7866 / NBRC 102419 / NCTC 12128 / CDC 0568-73</strain>
    </source>
</reference>
<evidence type="ECO:0000255" key="1">
    <source>
        <dbReference type="HAMAP-Rule" id="MF_01847"/>
    </source>
</evidence>
<comment type="function">
    <text evidence="1">Catalyzes the hydrolysis of 4-amino-2-methyl-5-hydroxymethylpyrimidine pyrophosphate (HMP-PP) to 4-amino-2-methyl-5-hydroxymethylpyrimidine phosphate (HMP-P).</text>
</comment>
<comment type="catalytic activity">
    <reaction evidence="1">
        <text>4-amino-2-methyl-5-(diphosphooxymethyl)pyrimidine + H2O = 4-amino-2-methyl-5-(phosphooxymethyl)pyrimidine + phosphate + H(+)</text>
        <dbReference type="Rhea" id="RHEA:27914"/>
        <dbReference type="ChEBI" id="CHEBI:15377"/>
        <dbReference type="ChEBI" id="CHEBI:15378"/>
        <dbReference type="ChEBI" id="CHEBI:43474"/>
        <dbReference type="ChEBI" id="CHEBI:57841"/>
        <dbReference type="ChEBI" id="CHEBI:58354"/>
    </reaction>
</comment>
<comment type="cofactor">
    <cofactor evidence="1">
        <name>Mg(2+)</name>
        <dbReference type="ChEBI" id="CHEBI:18420"/>
    </cofactor>
</comment>
<comment type="similarity">
    <text evidence="1">Belongs to the HAD-like hydrolase superfamily. Cof family.</text>
</comment>
<sequence length="272" mass="30409">MARLAAFDMDGTLLMPDHHLGEKTLSTLARLRERDITLTFATGRHVLEMQHILGALSLDAYLITGNGTRVHSLEGELLHRDDLPADVAELVLYQQWDTRASMHIFNDDGWFTGKEIPALLQAFVYSGFRYQIIDVKKMPLDRVTKICFCGDHDDLTRLQIQLHEALGERAHLCFSATDCLEVLPVGCNKGAALTVLTQHLGLSLRDCMAFGDAMNDREMLGSVGSGFIMGNAMPQLRAELPHLPVIGHCRNQAVSHYLTHWLDNPHLPYSPE</sequence>
<feature type="chain" id="PRO_1000188504" description="HMP-PP phosphatase">
    <location>
        <begin position="1"/>
        <end position="272"/>
    </location>
</feature>
<feature type="active site" description="Nucleophile" evidence="1">
    <location>
        <position position="8"/>
    </location>
</feature>
<feature type="binding site" evidence="1">
    <location>
        <position position="8"/>
    </location>
    <ligand>
        <name>Mg(2+)</name>
        <dbReference type="ChEBI" id="CHEBI:18420"/>
    </ligand>
</feature>
<feature type="binding site" evidence="1">
    <location>
        <position position="10"/>
    </location>
    <ligand>
        <name>Mg(2+)</name>
        <dbReference type="ChEBI" id="CHEBI:18420"/>
    </ligand>
</feature>
<feature type="binding site" evidence="1">
    <location>
        <position position="212"/>
    </location>
    <ligand>
        <name>Mg(2+)</name>
        <dbReference type="ChEBI" id="CHEBI:18420"/>
    </ligand>
</feature>
<accession>B7LMD3</accession>
<dbReference type="EC" id="3.6.1.-" evidence="1"/>
<dbReference type="EMBL" id="CU928158">
    <property type="protein sequence ID" value="CAQ90066.1"/>
    <property type="molecule type" value="Genomic_DNA"/>
</dbReference>
<dbReference type="RefSeq" id="WP_015953616.1">
    <property type="nucleotide sequence ID" value="NC_011740.1"/>
</dbReference>
<dbReference type="SMR" id="B7LMD3"/>
<dbReference type="GeneID" id="75056398"/>
<dbReference type="KEGG" id="efe:EFER_2571"/>
<dbReference type="HOGENOM" id="CLU_044146_5_2_6"/>
<dbReference type="OrthoDB" id="5498330at2"/>
<dbReference type="Proteomes" id="UP000000745">
    <property type="component" value="Chromosome"/>
</dbReference>
<dbReference type="GO" id="GO:0002145">
    <property type="term" value="F:4-amino-5-hydroxymethyl-2-methylpyrimidine diphosphatase activity"/>
    <property type="evidence" value="ECO:0007669"/>
    <property type="project" value="RHEA"/>
</dbReference>
<dbReference type="GO" id="GO:0000287">
    <property type="term" value="F:magnesium ion binding"/>
    <property type="evidence" value="ECO:0000250"/>
    <property type="project" value="UniProtKB"/>
</dbReference>
<dbReference type="GO" id="GO:0016791">
    <property type="term" value="F:phosphatase activity"/>
    <property type="evidence" value="ECO:0000250"/>
    <property type="project" value="UniProtKB"/>
</dbReference>
<dbReference type="CDD" id="cd07516">
    <property type="entry name" value="HAD_Pase"/>
    <property type="match status" value="1"/>
</dbReference>
<dbReference type="FunFam" id="3.30.1240.10:FF:000002">
    <property type="entry name" value="HMP-PP phosphatase"/>
    <property type="match status" value="1"/>
</dbReference>
<dbReference type="Gene3D" id="3.30.1240.10">
    <property type="match status" value="1"/>
</dbReference>
<dbReference type="Gene3D" id="3.40.50.1000">
    <property type="entry name" value="HAD superfamily/HAD-like"/>
    <property type="match status" value="1"/>
</dbReference>
<dbReference type="HAMAP" id="MF_01847">
    <property type="entry name" value="HMP_PP_phosphat"/>
    <property type="match status" value="1"/>
</dbReference>
<dbReference type="InterPro" id="IPR000150">
    <property type="entry name" value="Cof"/>
</dbReference>
<dbReference type="InterPro" id="IPR036412">
    <property type="entry name" value="HAD-like_sf"/>
</dbReference>
<dbReference type="InterPro" id="IPR006379">
    <property type="entry name" value="HAD-SF_hydro_IIB"/>
</dbReference>
<dbReference type="InterPro" id="IPR023214">
    <property type="entry name" value="HAD_sf"/>
</dbReference>
<dbReference type="InterPro" id="IPR023938">
    <property type="entry name" value="HMP-PP_phosphatase"/>
</dbReference>
<dbReference type="NCBIfam" id="TIGR00099">
    <property type="entry name" value="Cof-subfamily"/>
    <property type="match status" value="1"/>
</dbReference>
<dbReference type="NCBIfam" id="TIGR01484">
    <property type="entry name" value="HAD-SF-IIB"/>
    <property type="match status" value="1"/>
</dbReference>
<dbReference type="NCBIfam" id="NF011705">
    <property type="entry name" value="PRK15126.1"/>
    <property type="match status" value="1"/>
</dbReference>
<dbReference type="PANTHER" id="PTHR47267">
    <property type="match status" value="1"/>
</dbReference>
<dbReference type="PANTHER" id="PTHR47267:SF2">
    <property type="entry name" value="HMP-PP PHOSPHATASE"/>
    <property type="match status" value="1"/>
</dbReference>
<dbReference type="Pfam" id="PF08282">
    <property type="entry name" value="Hydrolase_3"/>
    <property type="match status" value="1"/>
</dbReference>
<dbReference type="SFLD" id="SFLDG01140">
    <property type="entry name" value="C2.B:_Phosphomannomutase_and_P"/>
    <property type="match status" value="1"/>
</dbReference>
<dbReference type="SFLD" id="SFLDS00003">
    <property type="entry name" value="Haloacid_Dehalogenase"/>
    <property type="match status" value="1"/>
</dbReference>
<dbReference type="SUPFAM" id="SSF56784">
    <property type="entry name" value="HAD-like"/>
    <property type="match status" value="1"/>
</dbReference>
<dbReference type="PROSITE" id="PS01228">
    <property type="entry name" value="COF_1"/>
    <property type="match status" value="1"/>
</dbReference>
<dbReference type="PROSITE" id="PS01229">
    <property type="entry name" value="COF_2"/>
    <property type="match status" value="1"/>
</dbReference>